<accession>Q9Z2X1</accession>
<accession>Q5FWK2</accession>
<accession>Q8BVU8</accession>
<accession>Q8K2U9</accession>
<accession>Q8R0E7</accession>
<organism>
    <name type="scientific">Mus musculus</name>
    <name type="common">Mouse</name>
    <dbReference type="NCBI Taxonomy" id="10090"/>
    <lineage>
        <taxon>Eukaryota</taxon>
        <taxon>Metazoa</taxon>
        <taxon>Chordata</taxon>
        <taxon>Craniata</taxon>
        <taxon>Vertebrata</taxon>
        <taxon>Euteleostomi</taxon>
        <taxon>Mammalia</taxon>
        <taxon>Eutheria</taxon>
        <taxon>Euarchontoglires</taxon>
        <taxon>Glires</taxon>
        <taxon>Rodentia</taxon>
        <taxon>Myomorpha</taxon>
        <taxon>Muroidea</taxon>
        <taxon>Muridae</taxon>
        <taxon>Murinae</taxon>
        <taxon>Mus</taxon>
        <taxon>Mus</taxon>
    </lineage>
</organism>
<dbReference type="EMBL" id="AK076478">
    <property type="protein sequence ID" value="BAC36361.1"/>
    <property type="status" value="ALT_SEQ"/>
    <property type="molecule type" value="mRNA"/>
</dbReference>
<dbReference type="EMBL" id="BC018185">
    <property type="protein sequence ID" value="AAH18185.1"/>
    <property type="molecule type" value="mRNA"/>
</dbReference>
<dbReference type="EMBL" id="BC025481">
    <property type="protein sequence ID" value="AAH25481.1"/>
    <property type="molecule type" value="mRNA"/>
</dbReference>
<dbReference type="EMBL" id="BC027003">
    <property type="protein sequence ID" value="AAH27003.1"/>
    <property type="status" value="ALT_INIT"/>
    <property type="molecule type" value="mRNA"/>
</dbReference>
<dbReference type="EMBL" id="BC029163">
    <property type="protein sequence ID" value="AAH29163.1"/>
    <property type="molecule type" value="mRNA"/>
</dbReference>
<dbReference type="EMBL" id="BC029764">
    <property type="protein sequence ID" value="AAH29764.1"/>
    <property type="status" value="ALT_INIT"/>
    <property type="molecule type" value="mRNA"/>
</dbReference>
<dbReference type="EMBL" id="BC033483">
    <property type="protein sequence ID" value="AAH33483.1"/>
    <property type="molecule type" value="mRNA"/>
</dbReference>
<dbReference type="EMBL" id="BC089313">
    <property type="protein sequence ID" value="AAH89313.1"/>
    <property type="molecule type" value="mRNA"/>
</dbReference>
<dbReference type="CCDS" id="CCDS20467.1">
    <molecule id="Q9Z2X1-1"/>
</dbReference>
<dbReference type="RefSeq" id="NP_001159899.1">
    <molecule id="Q9Z2X1-1"/>
    <property type="nucleotide sequence ID" value="NM_001166427.1"/>
</dbReference>
<dbReference type="RefSeq" id="NP_001159900.1">
    <molecule id="Q9Z2X1-1"/>
    <property type="nucleotide sequence ID" value="NM_001166428.1"/>
</dbReference>
<dbReference type="RefSeq" id="NP_001159901.1">
    <molecule id="Q9Z2X1-1"/>
    <property type="nucleotide sequence ID" value="NM_001166429.1"/>
</dbReference>
<dbReference type="RefSeq" id="NP_001159902.1">
    <molecule id="Q9Z2X1-1"/>
    <property type="nucleotide sequence ID" value="NM_001166430.1"/>
</dbReference>
<dbReference type="RefSeq" id="NP_001159903.1">
    <molecule id="Q9Z2X1-1"/>
    <property type="nucleotide sequence ID" value="NM_001166431.1"/>
</dbReference>
<dbReference type="RefSeq" id="NP_001159904.1">
    <molecule id="Q9Z2X1-1"/>
    <property type="nucleotide sequence ID" value="NM_001166432.1"/>
</dbReference>
<dbReference type="RefSeq" id="NP_598595.1">
    <molecule id="Q9Z2X1-1"/>
    <property type="nucleotide sequence ID" value="NM_133834.2"/>
</dbReference>
<dbReference type="RefSeq" id="XP_006506892.1">
    <molecule id="Q9Z2X1-1"/>
    <property type="nucleotide sequence ID" value="XM_006506829.5"/>
</dbReference>
<dbReference type="PDB" id="2DB1">
    <property type="method" value="NMR"/>
    <property type="chains" value="A=1-105"/>
</dbReference>
<dbReference type="PDBsum" id="2DB1"/>
<dbReference type="SMR" id="Q9Z2X1"/>
<dbReference type="BioGRID" id="221126">
    <property type="interactions" value="106"/>
</dbReference>
<dbReference type="CORUM" id="Q9Z2X1"/>
<dbReference type="FunCoup" id="Q9Z2X1">
    <property type="interactions" value="4565"/>
</dbReference>
<dbReference type="IntAct" id="Q9Z2X1">
    <property type="interactions" value="40"/>
</dbReference>
<dbReference type="MINT" id="Q9Z2X1"/>
<dbReference type="STRING" id="10090.ENSMUSP00000130023"/>
<dbReference type="GlyGen" id="Q9Z2X1">
    <property type="glycosylation" value="1 site, 1 O-linked glycan (1 site)"/>
</dbReference>
<dbReference type="iPTMnet" id="Q9Z2X1"/>
<dbReference type="PhosphoSitePlus" id="Q9Z2X1"/>
<dbReference type="SwissPalm" id="Q9Z2X1"/>
<dbReference type="REPRODUCTION-2DPAGE" id="Q9Z2X1"/>
<dbReference type="jPOST" id="Q9Z2X1"/>
<dbReference type="PaxDb" id="10090-ENSMUSP00000130023"/>
<dbReference type="PeptideAtlas" id="Q9Z2X1"/>
<dbReference type="ProteomicsDB" id="269618">
    <molecule id="Q9Z2X1-1"/>
</dbReference>
<dbReference type="ProteomicsDB" id="269619">
    <molecule id="Q9Z2X1-2"/>
</dbReference>
<dbReference type="Pumba" id="Q9Z2X1"/>
<dbReference type="Antibodypedia" id="13432">
    <property type="antibodies" value="346 antibodies from 33 providers"/>
</dbReference>
<dbReference type="DNASU" id="98758"/>
<dbReference type="Ensembl" id="ENSMUST00000035493.14">
    <molecule id="Q9Z2X1-1"/>
    <property type="protein sequence ID" value="ENSMUSP00000045048.8"/>
    <property type="gene ID" value="ENSMUSG00000042079.14"/>
</dbReference>
<dbReference type="Ensembl" id="ENSMUST00000163168.9">
    <molecule id="Q9Z2X1-1"/>
    <property type="protein sequence ID" value="ENSMUSP00000130023.3"/>
    <property type="gene ID" value="ENSMUSG00000042079.14"/>
</dbReference>
<dbReference type="Ensembl" id="ENSMUST00000167182.8">
    <molecule id="Q9Z2X1-1"/>
    <property type="protein sequence ID" value="ENSMUSP00000126817.2"/>
    <property type="gene ID" value="ENSMUSG00000042079.14"/>
</dbReference>
<dbReference type="Ensembl" id="ENSMUST00000180020.8">
    <molecule id="Q9Z2X1-1"/>
    <property type="protein sequence ID" value="ENSMUSP00000137632.2"/>
    <property type="gene ID" value="ENSMUSG00000042079.14"/>
</dbReference>
<dbReference type="Ensembl" id="ENSMUST00000180341.2">
    <molecule id="Q9Z2X1-1"/>
    <property type="protein sequence ID" value="ENSMUSP00000136700.2"/>
    <property type="gene ID" value="ENSMUSG00000042079.14"/>
</dbReference>
<dbReference type="GeneID" id="98758"/>
<dbReference type="KEGG" id="mmu:98758"/>
<dbReference type="UCSC" id="uc009dle.2">
    <molecule id="Q9Z2X1-1"/>
    <property type="organism name" value="mouse"/>
</dbReference>
<dbReference type="AGR" id="MGI:2138741"/>
<dbReference type="CTD" id="3185"/>
<dbReference type="MGI" id="MGI:2138741">
    <property type="gene designation" value="Hnrnpf"/>
</dbReference>
<dbReference type="VEuPathDB" id="HostDB:ENSMUSG00000042079"/>
<dbReference type="eggNOG" id="KOG4211">
    <property type="taxonomic scope" value="Eukaryota"/>
</dbReference>
<dbReference type="GeneTree" id="ENSGT00940000157838"/>
<dbReference type="HOGENOM" id="CLU_032003_1_0_1"/>
<dbReference type="InParanoid" id="Q9Z2X1"/>
<dbReference type="OMA" id="YYNDEYE"/>
<dbReference type="OrthoDB" id="431068at2759"/>
<dbReference type="PhylomeDB" id="Q9Z2X1"/>
<dbReference type="TreeFam" id="TF316157"/>
<dbReference type="Reactome" id="R-MMU-72163">
    <property type="pathway name" value="mRNA Splicing - Major Pathway"/>
</dbReference>
<dbReference type="Reactome" id="R-MMU-72203">
    <property type="pathway name" value="Processing of Capped Intron-Containing Pre-mRNA"/>
</dbReference>
<dbReference type="BioGRID-ORCS" id="98758">
    <property type="hits" value="15 hits in 79 CRISPR screens"/>
</dbReference>
<dbReference type="CD-CODE" id="DE1E139C">
    <property type="entry name" value="Chromatoid body"/>
</dbReference>
<dbReference type="ChiTaRS" id="Hnrnpf">
    <property type="organism name" value="mouse"/>
</dbReference>
<dbReference type="EvolutionaryTrace" id="Q9Z2X1"/>
<dbReference type="PRO" id="PR:Q9Z2X1"/>
<dbReference type="Proteomes" id="UP000000589">
    <property type="component" value="Chromosome 6"/>
</dbReference>
<dbReference type="RNAct" id="Q9Z2X1">
    <property type="molecule type" value="protein"/>
</dbReference>
<dbReference type="Bgee" id="ENSMUSG00000042079">
    <property type="expression patterns" value="Expressed in epiblast (generic) and 75 other cell types or tissues"/>
</dbReference>
<dbReference type="ExpressionAtlas" id="Q9Z2X1">
    <property type="expression patterns" value="baseline and differential"/>
</dbReference>
<dbReference type="GO" id="GO:0071013">
    <property type="term" value="C:catalytic step 2 spliceosome"/>
    <property type="evidence" value="ECO:0007669"/>
    <property type="project" value="Ensembl"/>
</dbReference>
<dbReference type="GO" id="GO:0005829">
    <property type="term" value="C:cytosol"/>
    <property type="evidence" value="ECO:0007669"/>
    <property type="project" value="Ensembl"/>
</dbReference>
<dbReference type="GO" id="GO:0005654">
    <property type="term" value="C:nucleoplasm"/>
    <property type="evidence" value="ECO:0007669"/>
    <property type="project" value="UniProtKB-SubCell"/>
</dbReference>
<dbReference type="GO" id="GO:0045202">
    <property type="term" value="C:synapse"/>
    <property type="evidence" value="ECO:0000314"/>
    <property type="project" value="SynGO"/>
</dbReference>
<dbReference type="GO" id="GO:0003727">
    <property type="term" value="F:single-stranded RNA binding"/>
    <property type="evidence" value="ECO:0000250"/>
    <property type="project" value="UniProtKB"/>
</dbReference>
<dbReference type="GO" id="GO:0006397">
    <property type="term" value="P:mRNA processing"/>
    <property type="evidence" value="ECO:0007669"/>
    <property type="project" value="UniProtKB-KW"/>
</dbReference>
<dbReference type="GO" id="GO:0043484">
    <property type="term" value="P:regulation of RNA splicing"/>
    <property type="evidence" value="ECO:0000250"/>
    <property type="project" value="UniProtKB"/>
</dbReference>
<dbReference type="GO" id="GO:0008380">
    <property type="term" value="P:RNA splicing"/>
    <property type="evidence" value="ECO:0007669"/>
    <property type="project" value="UniProtKB-KW"/>
</dbReference>
<dbReference type="CDD" id="cd12729">
    <property type="entry name" value="RRM1_hnRNPH_hnRNPH2_hnRNPF"/>
    <property type="match status" value="1"/>
</dbReference>
<dbReference type="CDD" id="cd12731">
    <property type="entry name" value="RRM2_hnRNPH_hnRNPH2_hnRNPF"/>
    <property type="match status" value="1"/>
</dbReference>
<dbReference type="CDD" id="cd12506">
    <property type="entry name" value="RRM3_hnRNPH_CRSF1_like"/>
    <property type="match status" value="1"/>
</dbReference>
<dbReference type="FunFam" id="3.30.70.330:FF:000071">
    <property type="entry name" value="heterogeneous nuclear ribonucleoprotein H isoform X1"/>
    <property type="match status" value="1"/>
</dbReference>
<dbReference type="FunFam" id="3.30.70.330:FF:000075">
    <property type="entry name" value="Heterogeneous nuclear ribonucleoprotein H1 (H)"/>
    <property type="match status" value="1"/>
</dbReference>
<dbReference type="FunFam" id="3.30.70.330:FF:000031">
    <property type="entry name" value="Heterogeneous nuclear ribonucleoprotein h3 isoform"/>
    <property type="match status" value="1"/>
</dbReference>
<dbReference type="Gene3D" id="3.30.70.330">
    <property type="match status" value="3"/>
</dbReference>
<dbReference type="InterPro" id="IPR050666">
    <property type="entry name" value="ESRP"/>
</dbReference>
<dbReference type="InterPro" id="IPR012677">
    <property type="entry name" value="Nucleotide-bd_a/b_plait_sf"/>
</dbReference>
<dbReference type="InterPro" id="IPR035979">
    <property type="entry name" value="RBD_domain_sf"/>
</dbReference>
<dbReference type="InterPro" id="IPR000504">
    <property type="entry name" value="RRM_dom"/>
</dbReference>
<dbReference type="InterPro" id="IPR012996">
    <property type="entry name" value="Znf_CHHC"/>
</dbReference>
<dbReference type="PANTHER" id="PTHR13976">
    <property type="entry name" value="HETEROGENEOUS NUCLEAR RIBONUCLEOPROTEIN-RELATED"/>
    <property type="match status" value="1"/>
</dbReference>
<dbReference type="Pfam" id="PF00076">
    <property type="entry name" value="RRM_1"/>
    <property type="match status" value="2"/>
</dbReference>
<dbReference type="Pfam" id="PF08080">
    <property type="entry name" value="zf-RNPHF"/>
    <property type="match status" value="1"/>
</dbReference>
<dbReference type="SMART" id="SM00360">
    <property type="entry name" value="RRM"/>
    <property type="match status" value="3"/>
</dbReference>
<dbReference type="SUPFAM" id="SSF54928">
    <property type="entry name" value="RNA-binding domain, RBD"/>
    <property type="match status" value="3"/>
</dbReference>
<dbReference type="PROSITE" id="PS50102">
    <property type="entry name" value="RRM"/>
    <property type="match status" value="3"/>
</dbReference>
<feature type="chain" id="PRO_0000253053" description="Heterogeneous nuclear ribonucleoprotein F">
    <location>
        <begin position="1"/>
        <end position="415"/>
    </location>
</feature>
<feature type="initiator methionine" description="Removed; alternate" evidence="2">
    <location>
        <position position="1"/>
    </location>
</feature>
<feature type="chain" id="PRO_0000367116" description="Heterogeneous nuclear ribonucleoprotein F, N-terminally processed">
    <location>
        <begin position="2"/>
        <end position="415"/>
    </location>
</feature>
<feature type="domain" description="RRM 1" evidence="4">
    <location>
        <begin position="11"/>
        <end position="90"/>
    </location>
</feature>
<feature type="domain" description="RRM 2" evidence="4">
    <location>
        <begin position="111"/>
        <end position="188"/>
    </location>
</feature>
<feature type="domain" description="RRM 3" evidence="4">
    <location>
        <begin position="289"/>
        <end position="366"/>
    </location>
</feature>
<feature type="region of interest" description="Interaction with RNA" evidence="1">
    <location>
        <begin position="81"/>
        <end position="86"/>
    </location>
</feature>
<feature type="region of interest" description="Interaction with RNA" evidence="1">
    <location>
        <begin position="179"/>
        <end position="184"/>
    </location>
</feature>
<feature type="region of interest" description="Interaction with RNA" evidence="1">
    <location>
        <begin position="355"/>
        <end position="360"/>
    </location>
</feature>
<feature type="site" description="Interaction with RNA" evidence="1">
    <location>
        <position position="16"/>
    </location>
</feature>
<feature type="site" description="Interaction with RNA" evidence="1">
    <location>
        <position position="20"/>
    </location>
</feature>
<feature type="site" description="Interaction with RNA" evidence="1">
    <location>
        <position position="52"/>
    </location>
</feature>
<feature type="site" description="Interaction with RNA" evidence="1">
    <location>
        <position position="75"/>
    </location>
</feature>
<feature type="site" description="Interaction with RNA" evidence="1">
    <location>
        <position position="116"/>
    </location>
</feature>
<feature type="site" description="Interaction with RNA" evidence="1">
    <location>
        <position position="120"/>
    </location>
</feature>
<feature type="site" description="Interaction with RNA" evidence="1">
    <location>
        <position position="150"/>
    </location>
</feature>
<feature type="site" description="Interaction with RNA" evidence="1">
    <location>
        <position position="173"/>
    </location>
</feature>
<feature type="site" description="Interaction with RNA" evidence="1">
    <location>
        <position position="294"/>
    </location>
</feature>
<feature type="site" description="Interaction with RNA" evidence="1">
    <location>
        <position position="298"/>
    </location>
</feature>
<feature type="site" description="Interaction with RNA" evidence="1">
    <location>
        <position position="326"/>
    </location>
</feature>
<feature type="site" description="Interaction with RNA" evidence="1">
    <location>
        <position position="349"/>
    </location>
</feature>
<feature type="modified residue" description="N-acetylmethionine" evidence="2">
    <location>
        <position position="1"/>
    </location>
</feature>
<feature type="modified residue" description="N-acetylmethionine; in Heterogeneous nuclear ribonucleoprotein F, N-terminally processed" evidence="2">
    <location>
        <position position="2"/>
    </location>
</feature>
<feature type="modified residue" description="Phosphoserine" evidence="2">
    <location>
        <position position="104"/>
    </location>
</feature>
<feature type="modified residue" description="Phosphoserine" evidence="7">
    <location>
        <position position="107"/>
    </location>
</feature>
<feature type="modified residue" description="Phosphoserine" evidence="2">
    <location>
        <position position="161"/>
    </location>
</feature>
<feature type="modified residue" description="Phosphoserine" evidence="7">
    <location>
        <position position="187"/>
    </location>
</feature>
<feature type="modified residue" description="Phosphoserine" evidence="2">
    <location>
        <position position="193"/>
    </location>
</feature>
<feature type="modified residue" description="Phosphoserine" evidence="3">
    <location>
        <position position="195"/>
    </location>
</feature>
<feature type="modified residue" description="N6-acetyllysine; alternate" evidence="8">
    <location>
        <position position="200"/>
    </location>
</feature>
<feature type="modified residue" description="Phosphothreonine" evidence="2">
    <location>
        <position position="215"/>
    </location>
</feature>
<feature type="modified residue" description="N6-acetyllysine; alternate" evidence="2">
    <location>
        <position position="224"/>
    </location>
</feature>
<feature type="modified residue" description="Phosphoserine" evidence="2">
    <location>
        <position position="265"/>
    </location>
</feature>
<feature type="cross-link" description="Glycyl lysine isopeptide (Lys-Gly) (interchain with G-Cter in SUMO)" evidence="1">
    <location>
        <position position="72"/>
    </location>
</feature>
<feature type="cross-link" description="Glycyl lysine isopeptide (Lys-Gly) (interchain with G-Cter in SUMO2)" evidence="2">
    <location>
        <position position="87"/>
    </location>
</feature>
<feature type="cross-link" description="Glycyl lysine isopeptide (Lys-Gly) (interchain with G-Cter in SUMO2)" evidence="2">
    <location>
        <position position="167"/>
    </location>
</feature>
<feature type="cross-link" description="Glycyl lysine isopeptide (Lys-Gly) (interchain with G-Cter in SUMO2)" evidence="2">
    <location>
        <position position="185"/>
    </location>
</feature>
<feature type="cross-link" description="Glycyl lysine isopeptide (Lys-Gly) (interchain with G-Cter in SUMO2); alternate" evidence="2">
    <location>
        <position position="200"/>
    </location>
</feature>
<feature type="cross-link" description="Glycyl lysine isopeptide (Lys-Gly) (interchain with G-Cter in SUMO2); alternate" evidence="2">
    <location>
        <position position="224"/>
    </location>
</feature>
<feature type="splice variant" id="VSP_021004" description="In isoform 2." evidence="5">
    <original>MMLGPEGGEGYVVKLRGLPWSC</original>
    <variation>MW</variation>
    <location>
        <begin position="1"/>
        <end position="22"/>
    </location>
</feature>
<feature type="sequence conflict" description="In Ref. 2; AAH27003." evidence="6" ref="2">
    <original>Y</original>
    <variation>C</variation>
    <location>
        <position position="272"/>
    </location>
</feature>
<feature type="strand" evidence="9">
    <location>
        <begin position="3"/>
        <end position="5"/>
    </location>
</feature>
<feature type="strand" evidence="9">
    <location>
        <begin position="12"/>
        <end position="17"/>
    </location>
</feature>
<feature type="helix" evidence="9">
    <location>
        <begin position="24"/>
        <end position="30"/>
    </location>
</feature>
<feature type="turn" evidence="9">
    <location>
        <begin position="31"/>
        <end position="33"/>
    </location>
</feature>
<feature type="helix" evidence="9">
    <location>
        <begin position="39"/>
        <end position="42"/>
    </location>
</feature>
<feature type="strand" evidence="9">
    <location>
        <begin position="43"/>
        <end position="47"/>
    </location>
</feature>
<feature type="strand" evidence="9">
    <location>
        <begin position="49"/>
        <end position="51"/>
    </location>
</feature>
<feature type="strand" evidence="9">
    <location>
        <begin position="53"/>
        <end position="63"/>
    </location>
</feature>
<feature type="helix" evidence="9">
    <location>
        <begin position="64"/>
        <end position="70"/>
    </location>
</feature>
<feature type="helix" evidence="9">
    <location>
        <begin position="71"/>
        <end position="73"/>
    </location>
</feature>
<feature type="strand" evidence="9">
    <location>
        <begin position="76"/>
        <end position="78"/>
    </location>
</feature>
<feature type="strand" evidence="9">
    <location>
        <begin position="81"/>
        <end position="88"/>
    </location>
</feature>
<feature type="helix" evidence="9">
    <location>
        <begin position="90"/>
        <end position="98"/>
    </location>
</feature>
<proteinExistence type="evidence at protein level"/>
<protein>
    <recommendedName>
        <fullName>Heterogeneous nuclear ribonucleoprotein F</fullName>
        <shortName>hnRNP F</shortName>
    </recommendedName>
    <component>
        <recommendedName>
            <fullName>Heterogeneous nuclear ribonucleoprotein F, N-terminally processed</fullName>
        </recommendedName>
    </component>
</protein>
<gene>
    <name type="primary">Hnrnpf</name>
    <name type="synonym">Hnrpf</name>
</gene>
<name>HNRPF_MOUSE</name>
<sequence>MMLGPEGGEGYVVKLRGLPWSCSIEDVQNFLSDCTIHDGVAGVHFIYTREGRQSGEAFVELESEDDVKLALKKDRESMGHRYIEVFKSHRTEMDWVLKHSGPNSADSANDGFVRLRGLPFGCTKEEIVQFFSGLEIVPNGITLPVDPEGKITGEAFVQFASQELAEKALGKHKERIGHRYIEVFKSSQEEVRSYSDPPLKFMSVQRPGPYDRPGTARRYIGIVKQAGLDRMRSGAYSAGYGGYEEYSGLSDGYGFTTDLFGRDLSYCLSGMYDHRYGDSEFTVQSTTGHCVHMRGLPYKATENDIYNFFSPLNPVRVHIEIGPDGRVTGEADVEFATHEEAVAAMSKDRANMQHRYIELFLNSTTGASNGAYSSQVMQGMGVSAAQATYSGLESQSVSGCYGAGYSGQNSMGGYD</sequence>
<reference key="1">
    <citation type="journal article" date="2005" name="Science">
        <title>The transcriptional landscape of the mammalian genome.</title>
        <authorList>
            <person name="Carninci P."/>
            <person name="Kasukawa T."/>
            <person name="Katayama S."/>
            <person name="Gough J."/>
            <person name="Frith M.C."/>
            <person name="Maeda N."/>
            <person name="Oyama R."/>
            <person name="Ravasi T."/>
            <person name="Lenhard B."/>
            <person name="Wells C."/>
            <person name="Kodzius R."/>
            <person name="Shimokawa K."/>
            <person name="Bajic V.B."/>
            <person name="Brenner S.E."/>
            <person name="Batalov S."/>
            <person name="Forrest A.R."/>
            <person name="Zavolan M."/>
            <person name="Davis M.J."/>
            <person name="Wilming L.G."/>
            <person name="Aidinis V."/>
            <person name="Allen J.E."/>
            <person name="Ambesi-Impiombato A."/>
            <person name="Apweiler R."/>
            <person name="Aturaliya R.N."/>
            <person name="Bailey T.L."/>
            <person name="Bansal M."/>
            <person name="Baxter L."/>
            <person name="Beisel K.W."/>
            <person name="Bersano T."/>
            <person name="Bono H."/>
            <person name="Chalk A.M."/>
            <person name="Chiu K.P."/>
            <person name="Choudhary V."/>
            <person name="Christoffels A."/>
            <person name="Clutterbuck D.R."/>
            <person name="Crowe M.L."/>
            <person name="Dalla E."/>
            <person name="Dalrymple B.P."/>
            <person name="de Bono B."/>
            <person name="Della Gatta G."/>
            <person name="di Bernardo D."/>
            <person name="Down T."/>
            <person name="Engstrom P."/>
            <person name="Fagiolini M."/>
            <person name="Faulkner G."/>
            <person name="Fletcher C.F."/>
            <person name="Fukushima T."/>
            <person name="Furuno M."/>
            <person name="Futaki S."/>
            <person name="Gariboldi M."/>
            <person name="Georgii-Hemming P."/>
            <person name="Gingeras T.R."/>
            <person name="Gojobori T."/>
            <person name="Green R.E."/>
            <person name="Gustincich S."/>
            <person name="Harbers M."/>
            <person name="Hayashi Y."/>
            <person name="Hensch T.K."/>
            <person name="Hirokawa N."/>
            <person name="Hill D."/>
            <person name="Huminiecki L."/>
            <person name="Iacono M."/>
            <person name="Ikeo K."/>
            <person name="Iwama A."/>
            <person name="Ishikawa T."/>
            <person name="Jakt M."/>
            <person name="Kanapin A."/>
            <person name="Katoh M."/>
            <person name="Kawasawa Y."/>
            <person name="Kelso J."/>
            <person name="Kitamura H."/>
            <person name="Kitano H."/>
            <person name="Kollias G."/>
            <person name="Krishnan S.P."/>
            <person name="Kruger A."/>
            <person name="Kummerfeld S.K."/>
            <person name="Kurochkin I.V."/>
            <person name="Lareau L.F."/>
            <person name="Lazarevic D."/>
            <person name="Lipovich L."/>
            <person name="Liu J."/>
            <person name="Liuni S."/>
            <person name="McWilliam S."/>
            <person name="Madan Babu M."/>
            <person name="Madera M."/>
            <person name="Marchionni L."/>
            <person name="Matsuda H."/>
            <person name="Matsuzawa S."/>
            <person name="Miki H."/>
            <person name="Mignone F."/>
            <person name="Miyake S."/>
            <person name="Morris K."/>
            <person name="Mottagui-Tabar S."/>
            <person name="Mulder N."/>
            <person name="Nakano N."/>
            <person name="Nakauchi H."/>
            <person name="Ng P."/>
            <person name="Nilsson R."/>
            <person name="Nishiguchi S."/>
            <person name="Nishikawa S."/>
            <person name="Nori F."/>
            <person name="Ohara O."/>
            <person name="Okazaki Y."/>
            <person name="Orlando V."/>
            <person name="Pang K.C."/>
            <person name="Pavan W.J."/>
            <person name="Pavesi G."/>
            <person name="Pesole G."/>
            <person name="Petrovsky N."/>
            <person name="Piazza S."/>
            <person name="Reed J."/>
            <person name="Reid J.F."/>
            <person name="Ring B.Z."/>
            <person name="Ringwald M."/>
            <person name="Rost B."/>
            <person name="Ruan Y."/>
            <person name="Salzberg S.L."/>
            <person name="Sandelin A."/>
            <person name="Schneider C."/>
            <person name="Schoenbach C."/>
            <person name="Sekiguchi K."/>
            <person name="Semple C.A."/>
            <person name="Seno S."/>
            <person name="Sessa L."/>
            <person name="Sheng Y."/>
            <person name="Shibata Y."/>
            <person name="Shimada H."/>
            <person name="Shimada K."/>
            <person name="Silva D."/>
            <person name="Sinclair B."/>
            <person name="Sperling S."/>
            <person name="Stupka E."/>
            <person name="Sugiura K."/>
            <person name="Sultana R."/>
            <person name="Takenaka Y."/>
            <person name="Taki K."/>
            <person name="Tammoja K."/>
            <person name="Tan S.L."/>
            <person name="Tang S."/>
            <person name="Taylor M.S."/>
            <person name="Tegner J."/>
            <person name="Teichmann S.A."/>
            <person name="Ueda H.R."/>
            <person name="van Nimwegen E."/>
            <person name="Verardo R."/>
            <person name="Wei C.L."/>
            <person name="Yagi K."/>
            <person name="Yamanishi H."/>
            <person name="Zabarovsky E."/>
            <person name="Zhu S."/>
            <person name="Zimmer A."/>
            <person name="Hide W."/>
            <person name="Bult C."/>
            <person name="Grimmond S.M."/>
            <person name="Teasdale R.D."/>
            <person name="Liu E.T."/>
            <person name="Brusic V."/>
            <person name="Quackenbush J."/>
            <person name="Wahlestedt C."/>
            <person name="Mattick J.S."/>
            <person name="Hume D.A."/>
            <person name="Kai C."/>
            <person name="Sasaki D."/>
            <person name="Tomaru Y."/>
            <person name="Fukuda S."/>
            <person name="Kanamori-Katayama M."/>
            <person name="Suzuki M."/>
            <person name="Aoki J."/>
            <person name="Arakawa T."/>
            <person name="Iida J."/>
            <person name="Imamura K."/>
            <person name="Itoh M."/>
            <person name="Kato T."/>
            <person name="Kawaji H."/>
            <person name="Kawagashira N."/>
            <person name="Kawashima T."/>
            <person name="Kojima M."/>
            <person name="Kondo S."/>
            <person name="Konno H."/>
            <person name="Nakano K."/>
            <person name="Ninomiya N."/>
            <person name="Nishio T."/>
            <person name="Okada M."/>
            <person name="Plessy C."/>
            <person name="Shibata K."/>
            <person name="Shiraki T."/>
            <person name="Suzuki S."/>
            <person name="Tagami M."/>
            <person name="Waki K."/>
            <person name="Watahiki A."/>
            <person name="Okamura-Oho Y."/>
            <person name="Suzuki H."/>
            <person name="Kawai J."/>
            <person name="Hayashizaki Y."/>
        </authorList>
    </citation>
    <scope>NUCLEOTIDE SEQUENCE [LARGE SCALE MRNA] (ISOFORM 1)</scope>
    <source>
        <strain>C57BL/6J</strain>
        <tissue>Head</tissue>
    </source>
</reference>
<reference key="2">
    <citation type="journal article" date="2004" name="Genome Res.">
        <title>The status, quality, and expansion of the NIH full-length cDNA project: the Mammalian Gene Collection (MGC).</title>
        <authorList>
            <consortium name="The MGC Project Team"/>
        </authorList>
    </citation>
    <scope>NUCLEOTIDE SEQUENCE [LARGE SCALE MRNA] (ISOFORMS 1 AND 2)</scope>
    <source>
        <strain>C57BL/6J</strain>
        <strain>Czech II</strain>
        <strain>FVB/N</strain>
        <tissue>Eye</tissue>
        <tissue>Fetal brain</tissue>
        <tissue>Mammary gland</tissue>
        <tissue>Mammary tumor</tissue>
    </source>
</reference>
<reference key="3">
    <citation type="journal article" date="2010" name="Cell">
        <title>A tissue-specific atlas of mouse protein phosphorylation and expression.</title>
        <authorList>
            <person name="Huttlin E.L."/>
            <person name="Jedrychowski M.P."/>
            <person name="Elias J.E."/>
            <person name="Goswami T."/>
            <person name="Rad R."/>
            <person name="Beausoleil S.A."/>
            <person name="Villen J."/>
            <person name="Haas W."/>
            <person name="Sowa M.E."/>
            <person name="Gygi S.P."/>
        </authorList>
    </citation>
    <scope>PHOSPHORYLATION [LARGE SCALE ANALYSIS] AT SER-107 AND SER-187</scope>
    <scope>IDENTIFICATION BY MASS SPECTROMETRY [LARGE SCALE ANALYSIS]</scope>
    <source>
        <tissue>Brain</tissue>
        <tissue>Brown adipose tissue</tissue>
        <tissue>Heart</tissue>
        <tissue>Kidney</tissue>
        <tissue>Liver</tissue>
        <tissue>Lung</tissue>
        <tissue>Pancreas</tissue>
        <tissue>Spleen</tissue>
        <tissue>Testis</tissue>
    </source>
</reference>
<reference key="4">
    <citation type="journal article" date="2013" name="Mol. Cell">
        <title>SIRT5-mediated lysine desuccinylation impacts diverse metabolic pathways.</title>
        <authorList>
            <person name="Park J."/>
            <person name="Chen Y."/>
            <person name="Tishkoff D.X."/>
            <person name="Peng C."/>
            <person name="Tan M."/>
            <person name="Dai L."/>
            <person name="Xie Z."/>
            <person name="Zhang Y."/>
            <person name="Zwaans B.M."/>
            <person name="Skinner M.E."/>
            <person name="Lombard D.B."/>
            <person name="Zhao Y."/>
        </authorList>
    </citation>
    <scope>ACETYLATION [LARGE SCALE ANALYSIS] AT LYS-200</scope>
    <scope>IDENTIFICATION BY MASS SPECTROMETRY [LARGE SCALE ANALYSIS]</scope>
    <source>
        <tissue>Embryonic fibroblast</tissue>
    </source>
</reference>
<reference key="5">
    <citation type="submission" date="2006-06" db="PDB data bank">
        <title>Solution structure of the RNA binding domain in heterogeneous nuclear ribonucleoprotein F homolog.</title>
        <authorList>
            <consortium name="RIKEN structural genomics initiative (RSGI)"/>
        </authorList>
    </citation>
    <scope>STRUCTURE BY NMR OF 1-105</scope>
</reference>
<evidence type="ECO:0000250" key="1"/>
<evidence type="ECO:0000250" key="2">
    <source>
        <dbReference type="UniProtKB" id="P52597"/>
    </source>
</evidence>
<evidence type="ECO:0000250" key="3">
    <source>
        <dbReference type="UniProtKB" id="Q794E4"/>
    </source>
</evidence>
<evidence type="ECO:0000255" key="4">
    <source>
        <dbReference type="PROSITE-ProRule" id="PRU00176"/>
    </source>
</evidence>
<evidence type="ECO:0000303" key="5">
    <source>
    </source>
</evidence>
<evidence type="ECO:0000305" key="6"/>
<evidence type="ECO:0007744" key="7">
    <source>
    </source>
</evidence>
<evidence type="ECO:0007744" key="8">
    <source>
    </source>
</evidence>
<evidence type="ECO:0007829" key="9">
    <source>
        <dbReference type="PDB" id="2DB1"/>
    </source>
</evidence>
<comment type="function">
    <text evidence="1">Component of the heterogeneous nuclear ribonucleoprotein (hnRNP) complexes which provide the substrate for the processing events that pre-mRNAs undergo before becoming functional, translatable mRNAs in the cytoplasm. Plays a role in the regulation of alternative splicing events. Binds G-rich sequences in pre-mRNAs and keeps target RNA in an unfolded state (By similarity).</text>
</comment>
<comment type="subunit">
    <text evidence="1">Identified in the spliceosome C complex. Interacts with AGO1, AGO2, TBP and TXNL4/DIM1 (By similarity).</text>
</comment>
<comment type="subcellular location">
    <subcellularLocation>
        <location evidence="1">Nucleus</location>
        <location evidence="1">Nucleoplasm</location>
    </subcellularLocation>
</comment>
<comment type="alternative products">
    <event type="alternative splicing"/>
    <isoform>
        <id>Q9Z2X1-1</id>
        <name>1</name>
        <sequence type="displayed"/>
    </isoform>
    <isoform>
        <id>Q9Z2X1-2</id>
        <name>2</name>
        <sequence type="described" ref="VSP_021004"/>
    </isoform>
</comment>
<comment type="domain">
    <text evidence="1">The N-terminal RRM domains are responsible for recognizing the G-tract of BCL-X RNA.</text>
</comment>
<comment type="PTM">
    <text evidence="1">Sumoylated.</text>
</comment>
<comment type="sequence caution" evidence="6">
    <conflict type="erroneous initiation">
        <sequence resource="EMBL-CDS" id="AAH27003"/>
    </conflict>
    <text>Truncated N-terminus.</text>
</comment>
<comment type="sequence caution" evidence="6">
    <conflict type="erroneous initiation">
        <sequence resource="EMBL-CDS" id="AAH29764"/>
    </conflict>
    <text>Truncated N-terminus.</text>
</comment>
<comment type="sequence caution" evidence="6">
    <conflict type="erroneous termination">
        <sequence resource="EMBL-CDS" id="BAC36361"/>
    </conflict>
    <text>Extended C-terminus.</text>
</comment>
<keyword id="KW-0002">3D-structure</keyword>
<keyword id="KW-0007">Acetylation</keyword>
<keyword id="KW-0025">Alternative splicing</keyword>
<keyword id="KW-1017">Isopeptide bond</keyword>
<keyword id="KW-0507">mRNA processing</keyword>
<keyword id="KW-0508">mRNA splicing</keyword>
<keyword id="KW-0539">Nucleus</keyword>
<keyword id="KW-0597">Phosphoprotein</keyword>
<keyword id="KW-1185">Reference proteome</keyword>
<keyword id="KW-0677">Repeat</keyword>
<keyword id="KW-0687">Ribonucleoprotein</keyword>
<keyword id="KW-0694">RNA-binding</keyword>
<keyword id="KW-0747">Spliceosome</keyword>
<keyword id="KW-0832">Ubl conjugation</keyword>